<name>YUGN_BACSU</name>
<protein>
    <recommendedName>
        <fullName>Uncharacterized protein YugN</fullName>
    </recommendedName>
</protein>
<accession>O05246</accession>
<accession>Q795M7</accession>
<keyword id="KW-1185">Reference proteome</keyword>
<organism>
    <name type="scientific">Bacillus subtilis (strain 168)</name>
    <dbReference type="NCBI Taxonomy" id="224308"/>
    <lineage>
        <taxon>Bacteria</taxon>
        <taxon>Bacillati</taxon>
        <taxon>Bacillota</taxon>
        <taxon>Bacilli</taxon>
        <taxon>Bacillales</taxon>
        <taxon>Bacillaceae</taxon>
        <taxon>Bacillus</taxon>
    </lineage>
</organism>
<feature type="chain" id="PRO_0000360479" description="Uncharacterized protein YugN">
    <location>
        <begin position="1"/>
        <end position="134"/>
    </location>
</feature>
<dbReference type="EMBL" id="Z93936">
    <property type="protein sequence ID" value="CAB07932.1"/>
    <property type="molecule type" value="Genomic_DNA"/>
</dbReference>
<dbReference type="EMBL" id="AL009126">
    <property type="protein sequence ID" value="CAB15122.1"/>
    <property type="molecule type" value="Genomic_DNA"/>
</dbReference>
<dbReference type="PIR" id="D70011">
    <property type="entry name" value="D70011"/>
</dbReference>
<dbReference type="RefSeq" id="NP_391011.1">
    <property type="nucleotide sequence ID" value="NC_000964.3"/>
</dbReference>
<dbReference type="RefSeq" id="WP_003228878.1">
    <property type="nucleotide sequence ID" value="NZ_OZ025638.1"/>
</dbReference>
<dbReference type="SMR" id="O05246"/>
<dbReference type="FunCoup" id="O05246">
    <property type="interactions" value="90"/>
</dbReference>
<dbReference type="STRING" id="224308.BSU31330"/>
<dbReference type="PaxDb" id="224308-BSU31330"/>
<dbReference type="DNASU" id="938845"/>
<dbReference type="EnsemblBacteria" id="CAB15122">
    <property type="protein sequence ID" value="CAB15122"/>
    <property type="gene ID" value="BSU_31330"/>
</dbReference>
<dbReference type="GeneID" id="938845"/>
<dbReference type="KEGG" id="bsu:BSU31330"/>
<dbReference type="PATRIC" id="fig|224308.179.peg.3397"/>
<dbReference type="eggNOG" id="ENOG50331JZ">
    <property type="taxonomic scope" value="Bacteria"/>
</dbReference>
<dbReference type="InParanoid" id="O05246"/>
<dbReference type="OrthoDB" id="2988890at2"/>
<dbReference type="BioCyc" id="BSUB:BSU31330-MONOMER"/>
<dbReference type="Proteomes" id="UP000001570">
    <property type="component" value="Chromosome"/>
</dbReference>
<dbReference type="Gene3D" id="3.30.310.100">
    <property type="entry name" value="YugN-like"/>
    <property type="match status" value="1"/>
</dbReference>
<dbReference type="InterPro" id="IPR014967">
    <property type="entry name" value="Uncharacterised_YugN-like"/>
</dbReference>
<dbReference type="InterPro" id="IPR036491">
    <property type="entry name" value="YugN-like_sf"/>
</dbReference>
<dbReference type="Pfam" id="PF08868">
    <property type="entry name" value="YugN"/>
    <property type="match status" value="1"/>
</dbReference>
<dbReference type="SUPFAM" id="SSF160755">
    <property type="entry name" value="YugN-like"/>
    <property type="match status" value="1"/>
</dbReference>
<gene>
    <name type="primary">yugN</name>
    <name type="ordered locus">BSU31330</name>
</gene>
<proteinExistence type="predicted"/>
<sequence length="134" mass="15117">MIPIPSAIDGQSFLLQELEQVMKPLGYVINGGWEYDHGYFDYKIDDRDGYLFLRIPVNAVQGSLDERGAAVRIGTPFMLRQVFQADVDDHAEGGPFQSLFNQFSEPERRDAEIDPAFLDIGASLVKELEDVLLH</sequence>
<reference key="1">
    <citation type="journal article" date="1997" name="Microbiology">
        <title>Analysis of the Bacillus subtilis genome: cloning and nucleotide sequence of a 62 kb region between 275 degrees (rrnB) and 284 degrees (pai).</title>
        <authorList>
            <person name="Oudega B."/>
            <person name="Koningstein G."/>
            <person name="Rodrigues L."/>
            <person name="de Sales Ramon M."/>
            <person name="Hilbert H."/>
            <person name="Duesterhoeft A."/>
            <person name="Pohl T.M."/>
            <person name="Weitzenegger T."/>
        </authorList>
    </citation>
    <scope>NUCLEOTIDE SEQUENCE [GENOMIC DNA]</scope>
    <source>
        <strain>168</strain>
    </source>
</reference>
<reference key="2">
    <citation type="journal article" date="1997" name="Nature">
        <title>The complete genome sequence of the Gram-positive bacterium Bacillus subtilis.</title>
        <authorList>
            <person name="Kunst F."/>
            <person name="Ogasawara N."/>
            <person name="Moszer I."/>
            <person name="Albertini A.M."/>
            <person name="Alloni G."/>
            <person name="Azevedo V."/>
            <person name="Bertero M.G."/>
            <person name="Bessieres P."/>
            <person name="Bolotin A."/>
            <person name="Borchert S."/>
            <person name="Borriss R."/>
            <person name="Boursier L."/>
            <person name="Brans A."/>
            <person name="Braun M."/>
            <person name="Brignell S.C."/>
            <person name="Bron S."/>
            <person name="Brouillet S."/>
            <person name="Bruschi C.V."/>
            <person name="Caldwell B."/>
            <person name="Capuano V."/>
            <person name="Carter N.M."/>
            <person name="Choi S.-K."/>
            <person name="Codani J.-J."/>
            <person name="Connerton I.F."/>
            <person name="Cummings N.J."/>
            <person name="Daniel R.A."/>
            <person name="Denizot F."/>
            <person name="Devine K.M."/>
            <person name="Duesterhoeft A."/>
            <person name="Ehrlich S.D."/>
            <person name="Emmerson P.T."/>
            <person name="Entian K.-D."/>
            <person name="Errington J."/>
            <person name="Fabret C."/>
            <person name="Ferrari E."/>
            <person name="Foulger D."/>
            <person name="Fritz C."/>
            <person name="Fujita M."/>
            <person name="Fujita Y."/>
            <person name="Fuma S."/>
            <person name="Galizzi A."/>
            <person name="Galleron N."/>
            <person name="Ghim S.-Y."/>
            <person name="Glaser P."/>
            <person name="Goffeau A."/>
            <person name="Golightly E.J."/>
            <person name="Grandi G."/>
            <person name="Guiseppi G."/>
            <person name="Guy B.J."/>
            <person name="Haga K."/>
            <person name="Haiech J."/>
            <person name="Harwood C.R."/>
            <person name="Henaut A."/>
            <person name="Hilbert H."/>
            <person name="Holsappel S."/>
            <person name="Hosono S."/>
            <person name="Hullo M.-F."/>
            <person name="Itaya M."/>
            <person name="Jones L.-M."/>
            <person name="Joris B."/>
            <person name="Karamata D."/>
            <person name="Kasahara Y."/>
            <person name="Klaerr-Blanchard M."/>
            <person name="Klein C."/>
            <person name="Kobayashi Y."/>
            <person name="Koetter P."/>
            <person name="Koningstein G."/>
            <person name="Krogh S."/>
            <person name="Kumano M."/>
            <person name="Kurita K."/>
            <person name="Lapidus A."/>
            <person name="Lardinois S."/>
            <person name="Lauber J."/>
            <person name="Lazarevic V."/>
            <person name="Lee S.-M."/>
            <person name="Levine A."/>
            <person name="Liu H."/>
            <person name="Masuda S."/>
            <person name="Mauel C."/>
            <person name="Medigue C."/>
            <person name="Medina N."/>
            <person name="Mellado R.P."/>
            <person name="Mizuno M."/>
            <person name="Moestl D."/>
            <person name="Nakai S."/>
            <person name="Noback M."/>
            <person name="Noone D."/>
            <person name="O'Reilly M."/>
            <person name="Ogawa K."/>
            <person name="Ogiwara A."/>
            <person name="Oudega B."/>
            <person name="Park S.-H."/>
            <person name="Parro V."/>
            <person name="Pohl T.M."/>
            <person name="Portetelle D."/>
            <person name="Porwollik S."/>
            <person name="Prescott A.M."/>
            <person name="Presecan E."/>
            <person name="Pujic P."/>
            <person name="Purnelle B."/>
            <person name="Rapoport G."/>
            <person name="Rey M."/>
            <person name="Reynolds S."/>
            <person name="Rieger M."/>
            <person name="Rivolta C."/>
            <person name="Rocha E."/>
            <person name="Roche B."/>
            <person name="Rose M."/>
            <person name="Sadaie Y."/>
            <person name="Sato T."/>
            <person name="Scanlan E."/>
            <person name="Schleich S."/>
            <person name="Schroeter R."/>
            <person name="Scoffone F."/>
            <person name="Sekiguchi J."/>
            <person name="Sekowska A."/>
            <person name="Seror S.J."/>
            <person name="Serror P."/>
            <person name="Shin B.-S."/>
            <person name="Soldo B."/>
            <person name="Sorokin A."/>
            <person name="Tacconi E."/>
            <person name="Takagi T."/>
            <person name="Takahashi H."/>
            <person name="Takemaru K."/>
            <person name="Takeuchi M."/>
            <person name="Tamakoshi A."/>
            <person name="Tanaka T."/>
            <person name="Terpstra P."/>
            <person name="Tognoni A."/>
            <person name="Tosato V."/>
            <person name="Uchiyama S."/>
            <person name="Vandenbol M."/>
            <person name="Vannier F."/>
            <person name="Vassarotti A."/>
            <person name="Viari A."/>
            <person name="Wambutt R."/>
            <person name="Wedler E."/>
            <person name="Wedler H."/>
            <person name="Weitzenegger T."/>
            <person name="Winters P."/>
            <person name="Wipat A."/>
            <person name="Yamamoto H."/>
            <person name="Yamane K."/>
            <person name="Yasumoto K."/>
            <person name="Yata K."/>
            <person name="Yoshida K."/>
            <person name="Yoshikawa H.-F."/>
            <person name="Zumstein E."/>
            <person name="Yoshikawa H."/>
            <person name="Danchin A."/>
        </authorList>
    </citation>
    <scope>NUCLEOTIDE SEQUENCE [LARGE SCALE GENOMIC DNA]</scope>
    <source>
        <strain>168</strain>
    </source>
</reference>